<organism>
    <name type="scientific">Staphylococcus aureus (strain USA300)</name>
    <dbReference type="NCBI Taxonomy" id="367830"/>
    <lineage>
        <taxon>Bacteria</taxon>
        <taxon>Bacillati</taxon>
        <taxon>Bacillota</taxon>
        <taxon>Bacilli</taxon>
        <taxon>Bacillales</taxon>
        <taxon>Staphylococcaceae</taxon>
        <taxon>Staphylococcus</taxon>
    </lineage>
</organism>
<evidence type="ECO:0000250" key="1"/>
<evidence type="ECO:0000250" key="2">
    <source>
        <dbReference type="UniProtKB" id="A0A0H2URK1"/>
    </source>
</evidence>
<evidence type="ECO:0000250" key="3">
    <source>
        <dbReference type="UniProtKB" id="Q2FUW1"/>
    </source>
</evidence>
<evidence type="ECO:0000255" key="4">
    <source>
        <dbReference type="PROSITE-ProRule" id="PRU00477"/>
    </source>
</evidence>
<evidence type="ECO:0000256" key="5">
    <source>
        <dbReference type="SAM" id="MobiDB-lite"/>
    </source>
</evidence>
<evidence type="ECO:0000305" key="6"/>
<proteinExistence type="inferred from homology"/>
<sequence>MSKRQKAFHDSLANEKTRVRLYKSGKNWVKSGIKEIEMFKIMGLPFISHSLVSQDNQSISKKMTGYGLKTTAVIGGAFTVNMLHDQQAFAASDAPLTSELNTQSETVGNQNSTTIEASTSTADSTSVTKNSSSVQTSNSDTVSSEKSEKVTSTTNSTSNQQEKLTSTSESTSSKNTTSSSDTKSVASTSSTEQPINTSTNQSTASNNTSQSTTPSSVNLNKTSTTSTSTAPVKLRTFSRLAMSTFASAATTTAVTANTITVNKDNLKQYMTTSGNATYDQSTGIVTLTQDAYSQKGAITLGTRIDSNKSFHFSGKVNLGNKYEGHGNGGDGIGFAFSPGVLGETGLNGAAVGIGGLSNAFGFKLDTYHNTSKPNSAAKANADPSNVAGGGAFGAFVTTDSYGVATTYTSSSTADNAAKLNVQPTNNTFQDFDINYNGDTKVMTVKYAGQTWTRNISDWIAKSGTTNFSLSMTASTGGATNLQQVQFGTFEYTESAVTQVRYVDVTTGKDIIPPKTYSGNVDQVVTIDNQQSALTAKGYNYTSVDSSYASTYNDTNKTVKMTNAGQSVTYYFTDVKAPTVTVGNQTIEVGKTMNPIVLTTTDNGTGTVTNTVTGLPSGLSYDSATNSIIGTPTKIGQSTVTVVSTDQANNKSTTTFTINVVDTTAPTVTPIGDQSSEVYSPISPIKIATQDNSGNAVTNTVTGLPSGLTFDSTNNTISGTPTNIGTSTISIVSTDASGNKTTTTFKYEVTRNSMSDSVSTSGSTQQSQSVSTSKADSQSASTSTSGSIVVSTSASTSKSTSVSLSDSVSASKSLSTSESNSVSSSTSTSLVNSQSVSSSMSDSASKSTSLSDSISNSSSTEKSESLSTSTSDSLRTSTSLSDSLSMSTSGSLSKSQSLSTSISGSSSTSASLSDSTSNAISTSTSLSESASTSDSISISNSIANSQSASTSKSDSQSTSISLSTSDSKSMSTSESLSDSTSTSGSVSGSLSIAASQSVSTSTSDSMSTSEIVSDSISTSGSLSASDSKSMSVSSSMSTSQSGSTSESLSDSQSTSDSDSKSLSQSTSQSGSTSTSTSTSASVRTSESQSTSGSMSASQSDSMSISTSFSDSTSDSKSASTASSESISQSAFTSTSGSVSTSTSLSTSNSERTSTSMSDSTSLSTSESDSISESTSTSDSISEAISASESTFISLSESNSTSDSESQSASAFLSESLSESTSESTSESVSSSTSESTSLSDSTSESGSTSTSLSNSTSGSTSISTSTSISESTSTFKSESVSTSLSMSTSTSLSDSTSLSTSLSDSTSDSKSDSLSTSMSTSDSISTSKSDSISTSTSLSGSTSESESDSTSSSESKSDSTSMSISMSQSTSGSTSTSTSTSLSDSTSTSLSLSASMNQSGVDSNSASQSASNSTSTSTSESDSQSTSSYTSQSTSQSESTSTSTSLSDSTSISKSTSQSGSVSTSASLSGSESESDSQSISTSASESTSESASTSLSDSTSTSNSGSASTSTSLSNSASASESDLSSTSLSDSTSASMQSSESDSQSTSASLSDSLSTSTSNRMSTIASLSTSVSTSESGSTSESTSESDSTSTSLSDSQSTSRSTSASGSASTSTSTSDSRSTSASTSTSMRTSTSDSQSMSLSTSTSTSMSDSTSLSDSVSDSTSDSTSASTSGSMSVSISLSDSTSTSTSASEVMSASISDSQSMSESVNDSESVSESNSESDSKSMSGSTSVSDSGSLSVSTSLRKSESVSESSSLSCSQSMSDSVSTSDSSSLSVSTSLRSSESVSESDSLSDSKSTSGSTSTSTSGSLSTSTSLSGSESVSESTSLSDSISMSDSTSTSDSDSLSGSISLSGSTSLSTSDSLSDSKSLSSSQSMSGSESTSTSVSDSQSSSTSNSQFDSMSISASESDSMSTSDSSSISGSNSTSTSLSTSDSMSGSVSVSTSTSLSDSISGSTSVSDSSSTSTSTSLSDSMSQSQSTSTSASGSLSTSISTSMSMSASTSSSQSTSVSTSLSTSDSISDSTSISISGSQSTVESESTSDSTSISDSESLSTSDSDSTSTSTSDSTSGSTSTSISESLSTSGSGSTSVSDSTSMSESNSSSVSMSQDKSDSTSISDSESVSTSTSTSLSTSDSTSTSESLSTSMSGSQSISDSTSTSMSGSTSTSESNSMHPSDSMSMHHTHSTSTSRLSSEATTSTSESQSTLSATSEVTKHNGTPAQSEKRLPDTGDSIKQNGLLGGVMTLLVGLGLMKRKKKKDENDQDDSQA</sequence>
<gene>
    <name type="primary">sraP</name>
    <name type="ordered locus">SAUSA300_2589</name>
</gene>
<comment type="function">
    <text evidence="1 3">Mediates binding to human platelets, possibly through a receptor-ligand interaction. Probably associated with virulence in endovascular infection (By similarity).</text>
</comment>
<comment type="subcellular location">
    <subcellularLocation>
        <location evidence="4">Secreted</location>
        <location evidence="4">Cell wall</location>
        <topology evidence="4">Peptidoglycan-anchor</topology>
    </subcellularLocation>
    <text evidence="3">Exported by the accessory SecA2/SecY2 system. Anchored to the cell wall by sortase A (By similarity).</text>
</comment>
<comment type="PTM">
    <text evidence="1 3">Proteolytically cleaved by a metalloprotease.</text>
</comment>
<comment type="PTM">
    <text evidence="2 3">Glycosylated (By similarity). It is probable that most of the Ser residues in SSR1 and SSR2 are O-GlcNAcylated. Sequential glycosylation by sugar transferases are able to generate complex sugar polymorphisms (By similarity).</text>
</comment>
<comment type="similarity">
    <text evidence="6">Belongs to the serine-rich repeat protein (SRRP) family.</text>
</comment>
<feature type="signal peptide" evidence="3">
    <location>
        <begin position="1"/>
        <end position="89"/>
    </location>
</feature>
<feature type="chain" id="PRO_0000273934" description="Serine-rich adhesin for platelets">
    <location>
        <begin position="90"/>
        <end position="2232"/>
    </location>
</feature>
<feature type="propeptide" id="PRO_0000273935" description="Removed by sortase" evidence="4">
    <location>
        <begin position="2233"/>
        <end position="2271"/>
    </location>
</feature>
<feature type="region of interest" description="Serine-rich repeat region 1, SRR1" evidence="3">
    <location>
        <begin position="90"/>
        <end position="230"/>
    </location>
</feature>
<feature type="region of interest" description="Disordered" evidence="5">
    <location>
        <begin position="100"/>
        <end position="229"/>
    </location>
</feature>
<feature type="region of interest" description="Non-repeat region (NRR)" evidence="3">
    <location>
        <begin position="231"/>
        <end position="751"/>
    </location>
</feature>
<feature type="region of interest" description="Disordered" evidence="5">
    <location>
        <begin position="751"/>
        <end position="791"/>
    </location>
</feature>
<feature type="region of interest" description="Serine-rich repeat region 2, SRR2" evidence="3">
    <location>
        <begin position="752"/>
        <end position="2232"/>
    </location>
</feature>
<feature type="region of interest" description="Disordered" evidence="5">
    <location>
        <begin position="806"/>
        <end position="2243"/>
    </location>
</feature>
<feature type="short sequence motif" description="LPXTG sorting signal" evidence="4">
    <location>
        <begin position="2229"/>
        <end position="2233"/>
    </location>
</feature>
<feature type="compositionally biased region" description="Polar residues" evidence="5">
    <location>
        <begin position="100"/>
        <end position="111"/>
    </location>
</feature>
<feature type="compositionally biased region" description="Low complexity" evidence="5">
    <location>
        <begin position="112"/>
        <end position="128"/>
    </location>
</feature>
<feature type="compositionally biased region" description="Polar residues" evidence="5">
    <location>
        <begin position="129"/>
        <end position="140"/>
    </location>
</feature>
<feature type="compositionally biased region" description="Low complexity" evidence="5">
    <location>
        <begin position="150"/>
        <end position="229"/>
    </location>
</feature>
<feature type="compositionally biased region" description="Low complexity" evidence="5">
    <location>
        <begin position="752"/>
        <end position="791"/>
    </location>
</feature>
<feature type="compositionally biased region" description="Low complexity" evidence="5">
    <location>
        <begin position="806"/>
        <end position="1392"/>
    </location>
</feature>
<feature type="compositionally biased region" description="Low complexity" evidence="5">
    <location>
        <begin position="1402"/>
        <end position="2214"/>
    </location>
</feature>
<feature type="modified residue" description="Pentaglycyl murein peptidoglycan amidated threonine" evidence="4">
    <location>
        <position position="2232"/>
    </location>
</feature>
<accession>Q2FDK5</accession>
<protein>
    <recommendedName>
        <fullName>Serine-rich adhesin for platelets</fullName>
    </recommendedName>
    <alternativeName>
        <fullName evidence="6">Adhesin SraP</fullName>
    </alternativeName>
    <alternativeName>
        <fullName>Staphylococcus aureus surface protein A</fullName>
    </alternativeName>
</protein>
<dbReference type="EMBL" id="CP000255">
    <property type="protein sequence ID" value="ABD21900.1"/>
    <property type="molecule type" value="Genomic_DNA"/>
</dbReference>
<dbReference type="RefSeq" id="WP_000044529.1">
    <property type="nucleotide sequence ID" value="NZ_CP027476.1"/>
</dbReference>
<dbReference type="SMR" id="Q2FDK5"/>
<dbReference type="KEGG" id="saa:SAUSA300_2589"/>
<dbReference type="HOGENOM" id="CLU_002109_0_0_9"/>
<dbReference type="OMA" id="TKYPEDP"/>
<dbReference type="Proteomes" id="UP000001939">
    <property type="component" value="Chromosome"/>
</dbReference>
<dbReference type="GO" id="GO:0005576">
    <property type="term" value="C:extracellular region"/>
    <property type="evidence" value="ECO:0007669"/>
    <property type="project" value="UniProtKB-KW"/>
</dbReference>
<dbReference type="GO" id="GO:0016020">
    <property type="term" value="C:membrane"/>
    <property type="evidence" value="ECO:0007669"/>
    <property type="project" value="InterPro"/>
</dbReference>
<dbReference type="GO" id="GO:0005509">
    <property type="term" value="F:calcium ion binding"/>
    <property type="evidence" value="ECO:0007669"/>
    <property type="project" value="InterPro"/>
</dbReference>
<dbReference type="GO" id="GO:0007155">
    <property type="term" value="P:cell adhesion"/>
    <property type="evidence" value="ECO:0007669"/>
    <property type="project" value="UniProtKB-KW"/>
</dbReference>
<dbReference type="CDD" id="cd01951">
    <property type="entry name" value="lectin_L-type"/>
    <property type="match status" value="1"/>
</dbReference>
<dbReference type="Gene3D" id="2.60.120.200">
    <property type="match status" value="1"/>
</dbReference>
<dbReference type="Gene3D" id="3.10.20.320">
    <property type="entry name" value="Putative peptidoglycan bound protein (lpxtg motif)"/>
    <property type="match status" value="1"/>
</dbReference>
<dbReference type="InterPro" id="IPR015919">
    <property type="entry name" value="Cadherin-like_sf"/>
</dbReference>
<dbReference type="InterPro" id="IPR013320">
    <property type="entry name" value="ConA-like_dom_sf"/>
</dbReference>
<dbReference type="InterPro" id="IPR022263">
    <property type="entry name" value="KxYKxGKxW"/>
</dbReference>
<dbReference type="InterPro" id="IPR056573">
    <property type="entry name" value="Lectin_L-type_dom"/>
</dbReference>
<dbReference type="InterPro" id="IPR019931">
    <property type="entry name" value="LPXTG_anchor"/>
</dbReference>
<dbReference type="NCBIfam" id="TIGR03715">
    <property type="entry name" value="KxYKxGKxW"/>
    <property type="match status" value="1"/>
</dbReference>
<dbReference type="NCBIfam" id="TIGR01167">
    <property type="entry name" value="LPXTG_anchor"/>
    <property type="match status" value="1"/>
</dbReference>
<dbReference type="PANTHER" id="PTHR22928">
    <property type="entry name" value="TELOMERE-ASSOCIATED PROTEIN RIF1"/>
    <property type="match status" value="1"/>
</dbReference>
<dbReference type="PANTHER" id="PTHR22928:SF3">
    <property type="entry name" value="TELOMERE-ASSOCIATED PROTEIN RIF1"/>
    <property type="match status" value="1"/>
</dbReference>
<dbReference type="Pfam" id="PF00746">
    <property type="entry name" value="Gram_pos_anchor"/>
    <property type="match status" value="1"/>
</dbReference>
<dbReference type="Pfam" id="PF19258">
    <property type="entry name" value="KxYKxGKxW_sig"/>
    <property type="match status" value="1"/>
</dbReference>
<dbReference type="Pfam" id="PF18483">
    <property type="entry name" value="Lectin_L-type_dom"/>
    <property type="match status" value="1"/>
</dbReference>
<dbReference type="SUPFAM" id="SSF49313">
    <property type="entry name" value="Cadherin-like"/>
    <property type="match status" value="2"/>
</dbReference>
<dbReference type="SUPFAM" id="SSF49899">
    <property type="entry name" value="Concanavalin A-like lectins/glucanases"/>
    <property type="match status" value="1"/>
</dbReference>
<dbReference type="PROSITE" id="PS50847">
    <property type="entry name" value="GRAM_POS_ANCHORING"/>
    <property type="match status" value="1"/>
</dbReference>
<reference key="1">
    <citation type="journal article" date="2006" name="Lancet">
        <title>Complete genome sequence of USA300, an epidemic clone of community-acquired meticillin-resistant Staphylococcus aureus.</title>
        <authorList>
            <person name="Diep B.A."/>
            <person name="Gill S.R."/>
            <person name="Chang R.F."/>
            <person name="Phan T.H."/>
            <person name="Chen J.H."/>
            <person name="Davidson M.G."/>
            <person name="Lin F."/>
            <person name="Lin J."/>
            <person name="Carleton H.A."/>
            <person name="Mongodin E.F."/>
            <person name="Sensabaugh G.F."/>
            <person name="Perdreau-Remington F."/>
        </authorList>
    </citation>
    <scope>NUCLEOTIDE SEQUENCE [LARGE SCALE GENOMIC DNA]</scope>
    <source>
        <strain>USA300</strain>
    </source>
</reference>
<keyword id="KW-0130">Cell adhesion</keyword>
<keyword id="KW-0134">Cell wall</keyword>
<keyword id="KW-0325">Glycoprotein</keyword>
<keyword id="KW-0572">Peptidoglycan-anchor</keyword>
<keyword id="KW-0964">Secreted</keyword>
<keyword id="KW-0732">Signal</keyword>
<keyword id="KW-0843">Virulence</keyword>
<name>SRAP_STAA3</name>